<keyword id="KW-0067">ATP-binding</keyword>
<keyword id="KW-0324">Glycolysis</keyword>
<keyword id="KW-0418">Kinase</keyword>
<keyword id="KW-0460">Magnesium</keyword>
<keyword id="KW-0479">Metal-binding</keyword>
<keyword id="KW-0547">Nucleotide-binding</keyword>
<keyword id="KW-0630">Potassium</keyword>
<keyword id="KW-1185">Reference proteome</keyword>
<keyword id="KW-0808">Transferase</keyword>
<accession>P9WID2</accession>
<accession>L0T8F1</accession>
<accession>O86352</accession>
<accession>Q7D7L4</accession>
<comment type="function">
    <text evidence="2">Catalyzes the phosphorylation of D-fructose 6-phosphate to fructose 1,6-bisphosphate by ATP, the first committing step of glycolysis. Can also catalyze the phosphorylation of tagatose-6-phosphate.</text>
</comment>
<comment type="catalytic activity">
    <reaction evidence="2">
        <text>beta-D-fructose 6-phosphate + ATP = beta-D-fructose 1,6-bisphosphate + ADP + H(+)</text>
        <dbReference type="Rhea" id="RHEA:16109"/>
        <dbReference type="ChEBI" id="CHEBI:15378"/>
        <dbReference type="ChEBI" id="CHEBI:30616"/>
        <dbReference type="ChEBI" id="CHEBI:32966"/>
        <dbReference type="ChEBI" id="CHEBI:57634"/>
        <dbReference type="ChEBI" id="CHEBI:456216"/>
        <dbReference type="EC" id="2.7.1.11"/>
    </reaction>
</comment>
<comment type="catalytic activity">
    <reaction evidence="2">
        <text>D-tagatofuranose 6-phosphate + ATP = D-tagatofuranose 1,6-bisphosphate + ADP + H(+)</text>
        <dbReference type="Rhea" id="RHEA:12420"/>
        <dbReference type="ChEBI" id="CHEBI:15378"/>
        <dbReference type="ChEBI" id="CHEBI:30616"/>
        <dbReference type="ChEBI" id="CHEBI:58694"/>
        <dbReference type="ChEBI" id="CHEBI:58695"/>
        <dbReference type="ChEBI" id="CHEBI:456216"/>
        <dbReference type="EC" id="2.7.1.144"/>
    </reaction>
</comment>
<comment type="cofactor">
    <cofactor evidence="2">
        <name>Mg(2+)</name>
        <dbReference type="ChEBI" id="CHEBI:18420"/>
    </cofactor>
</comment>
<comment type="pathway">
    <text evidence="2">Carbohydrate degradation; glycolysis; D-glyceraldehyde 3-phosphate and glycerone phosphate from D-glucose: step 3/4.</text>
</comment>
<comment type="induction">
    <text evidence="3">A member of the dormancy regulon. Induced in response to reduced oxygen tension (hypoxia) and low levels of nitric oxide (NO).</text>
</comment>
<comment type="similarity">
    <text evidence="4">Belongs to the carbohydrate kinase PfkB family.</text>
</comment>
<feature type="chain" id="PRO_0000428027" description="ATP-dependent 6-phosphofructokinase isozyme 2">
    <location>
        <begin position="1"/>
        <end position="339"/>
    </location>
</feature>
<feature type="active site" evidence="1">
    <location>
        <position position="265"/>
    </location>
</feature>
<feature type="binding site" evidence="1">
    <location>
        <begin position="22"/>
        <end position="24"/>
    </location>
    <ligand>
        <name>substrate</name>
    </ligand>
</feature>
<feature type="binding site" evidence="1">
    <location>
        <begin position="37"/>
        <end position="39"/>
    </location>
    <ligand>
        <name>substrate</name>
    </ligand>
</feature>
<feature type="binding site" evidence="1">
    <location>
        <position position="37"/>
    </location>
    <ligand>
        <name>ATP</name>
        <dbReference type="ChEBI" id="CHEBI:30616"/>
        <note>ligand shared between dimeric partners</note>
    </ligand>
</feature>
<feature type="binding site" evidence="1">
    <location>
        <begin position="49"/>
        <end position="53"/>
    </location>
    <ligand>
        <name>substrate</name>
    </ligand>
</feature>
<feature type="binding site" evidence="1">
    <location>
        <begin position="100"/>
        <end position="102"/>
    </location>
    <ligand>
        <name>substrate</name>
    </ligand>
</feature>
<feature type="binding site" evidence="1">
    <location>
        <position position="150"/>
    </location>
    <ligand>
        <name>substrate</name>
    </ligand>
</feature>
<feature type="binding site" description="in other chain" evidence="1">
    <location>
        <begin position="194"/>
        <end position="196"/>
    </location>
    <ligand>
        <name>ATP</name>
        <dbReference type="ChEBI" id="CHEBI:30616"/>
        <note>ligand shared between dimeric partners</note>
    </ligand>
</feature>
<feature type="binding site" evidence="1">
    <location>
        <position position="199"/>
    </location>
    <ligand>
        <name>Mg(2+)</name>
        <dbReference type="ChEBI" id="CHEBI:18420"/>
        <note>catalytic</note>
    </ligand>
</feature>
<feature type="binding site" description="in other chain" evidence="1">
    <location>
        <begin position="233"/>
        <end position="238"/>
    </location>
    <ligand>
        <name>ATP</name>
        <dbReference type="ChEBI" id="CHEBI:30616"/>
        <note>ligand shared between dimeric partners</note>
    </ligand>
</feature>
<feature type="binding site" evidence="1">
    <location>
        <position position="259"/>
    </location>
    <ligand>
        <name>K(+)</name>
        <dbReference type="ChEBI" id="CHEBI:29103"/>
    </ligand>
</feature>
<feature type="binding site" evidence="1">
    <location>
        <position position="261"/>
    </location>
    <ligand>
        <name>K(+)</name>
        <dbReference type="ChEBI" id="CHEBI:29103"/>
    </ligand>
</feature>
<feature type="binding site" evidence="1">
    <location>
        <position position="265"/>
    </location>
    <ligand>
        <name>substrate</name>
    </ligand>
</feature>
<feature type="binding site" evidence="1">
    <location>
        <position position="295"/>
    </location>
    <ligand>
        <name>K(+)</name>
        <dbReference type="ChEBI" id="CHEBI:29103"/>
    </ligand>
</feature>
<feature type="binding site" evidence="1">
    <location>
        <position position="298"/>
    </location>
    <ligand>
        <name>K(+)</name>
        <dbReference type="ChEBI" id="CHEBI:29103"/>
    </ligand>
</feature>
<feature type="binding site" evidence="1">
    <location>
        <position position="300"/>
    </location>
    <ligand>
        <name>K(+)</name>
        <dbReference type="ChEBI" id="CHEBI:29103"/>
    </ligand>
</feature>
<feature type="binding site" evidence="1">
    <location>
        <position position="302"/>
    </location>
    <ligand>
        <name>K(+)</name>
        <dbReference type="ChEBI" id="CHEBI:29103"/>
    </ligand>
</feature>
<reference key="1">
    <citation type="journal article" date="2002" name="J. Bacteriol.">
        <title>Whole-genome comparison of Mycobacterium tuberculosis clinical and laboratory strains.</title>
        <authorList>
            <person name="Fleischmann R.D."/>
            <person name="Alland D."/>
            <person name="Eisen J.A."/>
            <person name="Carpenter L."/>
            <person name="White O."/>
            <person name="Peterson J.D."/>
            <person name="DeBoy R.T."/>
            <person name="Dodson R.J."/>
            <person name="Gwinn M.L."/>
            <person name="Haft D.H."/>
            <person name="Hickey E.K."/>
            <person name="Kolonay J.F."/>
            <person name="Nelson W.C."/>
            <person name="Umayam L.A."/>
            <person name="Ermolaeva M.D."/>
            <person name="Salzberg S.L."/>
            <person name="Delcher A."/>
            <person name="Utterback T.R."/>
            <person name="Weidman J.F."/>
            <person name="Khouri H.M."/>
            <person name="Gill J."/>
            <person name="Mikula A."/>
            <person name="Bishai W."/>
            <person name="Jacobs W.R. Jr."/>
            <person name="Venter J.C."/>
            <person name="Fraser C.M."/>
        </authorList>
    </citation>
    <scope>NUCLEOTIDE SEQUENCE [LARGE SCALE GENOMIC DNA]</scope>
    <source>
        <strain>CDC 1551 / Oshkosh</strain>
    </source>
</reference>
<reference key="2">
    <citation type="journal article" date="2003" name="J. Exp. Med.">
        <title>Inhibition of respiration by nitric oxide induces a Mycobacterium tuberculosis dormancy program.</title>
        <authorList>
            <person name="Voskuil M.I."/>
            <person name="Schnappinger D."/>
            <person name="Visconti K.C."/>
            <person name="Harrell M.I."/>
            <person name="Dolganov G.M."/>
            <person name="Sherman D.R."/>
            <person name="Schoolnik G.K."/>
        </authorList>
    </citation>
    <scope>INDUCTION BY NITRIC OXIDE (NO) AND BY HYPOXIA</scope>
    <scope>DORMANCY REGULON</scope>
    <source>
        <strain>CDC 1551 / Oshkosh</strain>
    </source>
</reference>
<evidence type="ECO:0000250" key="1"/>
<evidence type="ECO:0000250" key="2">
    <source>
        <dbReference type="UniProtKB" id="P9WID3"/>
    </source>
</evidence>
<evidence type="ECO:0000269" key="3">
    <source>
    </source>
</evidence>
<evidence type="ECO:0000305" key="4"/>
<dbReference type="EC" id="2.7.1.11" evidence="2"/>
<dbReference type="EC" id="2.7.1.144" evidence="2"/>
<dbReference type="EMBL" id="AE000516">
    <property type="protein sequence ID" value="AAK46367.1"/>
    <property type="molecule type" value="Genomic_DNA"/>
</dbReference>
<dbReference type="PIR" id="D70942">
    <property type="entry name" value="D70942"/>
</dbReference>
<dbReference type="RefSeq" id="WP_003899139.1">
    <property type="nucleotide sequence ID" value="NZ_KK341227.1"/>
</dbReference>
<dbReference type="SMR" id="P9WID2"/>
<dbReference type="KEGG" id="mtc:MT2088"/>
<dbReference type="PATRIC" id="fig|83331.31.peg.2252"/>
<dbReference type="HOGENOM" id="CLU_050013_0_2_11"/>
<dbReference type="UniPathway" id="UPA00109">
    <property type="reaction ID" value="UER00182"/>
</dbReference>
<dbReference type="Proteomes" id="UP000001020">
    <property type="component" value="Chromosome"/>
</dbReference>
<dbReference type="GO" id="GO:0005829">
    <property type="term" value="C:cytosol"/>
    <property type="evidence" value="ECO:0007669"/>
    <property type="project" value="TreeGrafter"/>
</dbReference>
<dbReference type="GO" id="GO:0003872">
    <property type="term" value="F:6-phosphofructokinase activity"/>
    <property type="evidence" value="ECO:0007669"/>
    <property type="project" value="UniProtKB-EC"/>
</dbReference>
<dbReference type="GO" id="GO:0005524">
    <property type="term" value="F:ATP binding"/>
    <property type="evidence" value="ECO:0007669"/>
    <property type="project" value="UniProtKB-KW"/>
</dbReference>
<dbReference type="GO" id="GO:0046872">
    <property type="term" value="F:metal ion binding"/>
    <property type="evidence" value="ECO:0007669"/>
    <property type="project" value="UniProtKB-KW"/>
</dbReference>
<dbReference type="GO" id="GO:0009024">
    <property type="term" value="F:tagatose-6-phosphate kinase activity"/>
    <property type="evidence" value="ECO:0007669"/>
    <property type="project" value="RHEA"/>
</dbReference>
<dbReference type="CDD" id="cd01164">
    <property type="entry name" value="FruK_PfkB_like"/>
    <property type="match status" value="1"/>
</dbReference>
<dbReference type="FunFam" id="3.40.1190.20:FF:000074">
    <property type="entry name" value="6-phosphofructokinase pfkb (Phosphohexokinase) (Phosphofructokinase)"/>
    <property type="match status" value="1"/>
</dbReference>
<dbReference type="Gene3D" id="3.40.1190.20">
    <property type="match status" value="1"/>
</dbReference>
<dbReference type="InterPro" id="IPR002173">
    <property type="entry name" value="Carboh/pur_kinase_PfkB_CS"/>
</dbReference>
<dbReference type="InterPro" id="IPR011611">
    <property type="entry name" value="PfkB_dom"/>
</dbReference>
<dbReference type="InterPro" id="IPR029056">
    <property type="entry name" value="Ribokinase-like"/>
</dbReference>
<dbReference type="InterPro" id="IPR017583">
    <property type="entry name" value="Tagatose/fructose_Pkinase"/>
</dbReference>
<dbReference type="NCBIfam" id="TIGR03168">
    <property type="entry name" value="1-PFK"/>
    <property type="match status" value="1"/>
</dbReference>
<dbReference type="PANTHER" id="PTHR46566">
    <property type="entry name" value="1-PHOSPHOFRUCTOKINASE-RELATED"/>
    <property type="match status" value="1"/>
</dbReference>
<dbReference type="PANTHER" id="PTHR46566:SF2">
    <property type="entry name" value="ATP-DEPENDENT 6-PHOSPHOFRUCTOKINASE ISOZYME 2"/>
    <property type="match status" value="1"/>
</dbReference>
<dbReference type="Pfam" id="PF00294">
    <property type="entry name" value="PfkB"/>
    <property type="match status" value="1"/>
</dbReference>
<dbReference type="PIRSF" id="PIRSF000535">
    <property type="entry name" value="1PFK/6PFK/LacC"/>
    <property type="match status" value="1"/>
</dbReference>
<dbReference type="SUPFAM" id="SSF53613">
    <property type="entry name" value="Ribokinase-like"/>
    <property type="match status" value="1"/>
</dbReference>
<dbReference type="PROSITE" id="PS00583">
    <property type="entry name" value="PFKB_KINASES_1"/>
    <property type="match status" value="1"/>
</dbReference>
<proteinExistence type="evidence at transcript level"/>
<name>PFKB_MYCTO</name>
<sequence length="339" mass="35401">MTEPAAWDEGKPRIITLTMNPALDITTSVDVVRPTEKMRCGAPRYDPGGGGINVARIVHVLGGCSTALFPAGGSTGSLLMALLGDAGVPFRVIPIAASTRESFTVNESRTAKQYRFVLPGPSLTVAEQEQCLDELRGAAASAAFVVASGSLPPGVAADYYQRVADICRRSSTPLILDTSGGGLQHISSGVFLLKASVRELRECVGSELLTEPEQLAAAHELIDRGRAEVVVVSLGSQGALLATRHASHRFSSIPMTAVSGVGAGDAMVAAITVGLSRGWSLIKSVRLGNAAGAAMLLTPGTAACNRDDVERFFELAAEPTEVGQDQYVWHPIVNPEASP</sequence>
<organism>
    <name type="scientific">Mycobacterium tuberculosis (strain CDC 1551 / Oshkosh)</name>
    <dbReference type="NCBI Taxonomy" id="83331"/>
    <lineage>
        <taxon>Bacteria</taxon>
        <taxon>Bacillati</taxon>
        <taxon>Actinomycetota</taxon>
        <taxon>Actinomycetes</taxon>
        <taxon>Mycobacteriales</taxon>
        <taxon>Mycobacteriaceae</taxon>
        <taxon>Mycobacterium</taxon>
        <taxon>Mycobacterium tuberculosis complex</taxon>
    </lineage>
</organism>
<gene>
    <name type="primary">pfkB</name>
    <name type="ordered locus">MT2088</name>
</gene>
<protein>
    <recommendedName>
        <fullName evidence="2">ATP-dependent 6-phosphofructokinase isozyme 2</fullName>
        <shortName evidence="2">ATP-PFK 2</shortName>
        <shortName evidence="2">Phosphofructokinase 2</shortName>
        <ecNumber evidence="2">2.7.1.11</ecNumber>
    </recommendedName>
    <alternativeName>
        <fullName evidence="2">Phosphofructokinase B</fullName>
    </alternativeName>
    <alternativeName>
        <fullName evidence="2">Phosphohexokinase 2</fullName>
    </alternativeName>
    <alternativeName>
        <fullName evidence="4">Tagatose-6-phosphate kinase</fullName>
        <ecNumber evidence="2">2.7.1.144</ecNumber>
    </alternativeName>
</protein>